<keyword id="KW-0130">Cell adhesion</keyword>
<keyword id="KW-1003">Cell membrane</keyword>
<keyword id="KW-0325">Glycoprotein</keyword>
<keyword id="KW-0336">GPI-anchor</keyword>
<keyword id="KW-0449">Lipoprotein</keyword>
<keyword id="KW-0472">Membrane</keyword>
<keyword id="KW-1185">Reference proteome</keyword>
<keyword id="KW-0732">Signal</keyword>
<keyword id="KW-0843">Virulence</keyword>
<name>PGA28_CANAL</name>
<protein>
    <recommendedName>
        <fullName>Probable GPI-anchored adhesin-like protein PGA28</fullName>
    </recommendedName>
    <alternativeName>
        <fullName>Predicted GPI-anchored protein 28</fullName>
    </alternativeName>
</protein>
<organism>
    <name type="scientific">Candida albicans (strain SC5314 / ATCC MYA-2876)</name>
    <name type="common">Yeast</name>
    <dbReference type="NCBI Taxonomy" id="237561"/>
    <lineage>
        <taxon>Eukaryota</taxon>
        <taxon>Fungi</taxon>
        <taxon>Dikarya</taxon>
        <taxon>Ascomycota</taxon>
        <taxon>Saccharomycotina</taxon>
        <taxon>Pichiomycetes</taxon>
        <taxon>Debaryomycetaceae</taxon>
        <taxon>Candida/Lodderomyces clade</taxon>
        <taxon>Candida</taxon>
    </lineage>
</organism>
<sequence length="226" mass="23267">MKFFAYFAVIALSSASLINLFKRATANGCEVESCYKAHQTLINSCNGAFDFNCLCNLPQSYFQNLYDCSKSCDTLQESDIHSPSDIRSIYCEAASNSIYTFSIDSISLDMIGYSDFETDTEATTGSDTRTKAATGATTSAGTGVTKTSETGGVSSTANSEAKSGSVTTSKSGSTSISESKTTSGSSSSGKSSSSTSSASSQQTSSHAGGASGAFVSLLGLFAALLI</sequence>
<proteinExistence type="evidence at protein level"/>
<accession>Q5A5K7</accession>
<accession>A0A1D8PRA9</accession>
<accession>Q3MP45</accession>
<accession>Q5A5D8</accession>
<comment type="function">
    <text evidence="1 4 6">Putative adhesin which is involved in cell adhesion and virulence (By similarity). Plays a role in Candida-bacterial interactions and subsequent regulation of filamentation.</text>
</comment>
<comment type="subcellular location">
    <subcellularLocation>
        <location evidence="7">Cell membrane</location>
        <topology evidence="7">Lipid-anchor</topology>
        <topology evidence="7">GPI-anchor</topology>
    </subcellularLocation>
</comment>
<comment type="induction">
    <text evidence="5">Up-regulated upon milbemycins A3 oxim derivative (A3Ox) treatment.</text>
</comment>
<comment type="PTM">
    <text>Predicted to be a cleavage substrate for KEX2.</text>
</comment>
<feature type="signal peptide" evidence="2">
    <location>
        <begin position="1"/>
        <end position="26"/>
    </location>
</feature>
<feature type="chain" id="PRO_0000424931" description="Probable GPI-anchored adhesin-like protein PGA28">
    <location>
        <begin position="27"/>
        <end position="197"/>
    </location>
</feature>
<feature type="propeptide" id="PRO_0000424932" description="Removed in mature form" evidence="2">
    <location>
        <begin position="198"/>
        <end position="226"/>
    </location>
</feature>
<feature type="region of interest" description="Disordered" evidence="3">
    <location>
        <begin position="119"/>
        <end position="209"/>
    </location>
</feature>
<feature type="compositionally biased region" description="Low complexity" evidence="3">
    <location>
        <begin position="131"/>
        <end position="148"/>
    </location>
</feature>
<feature type="compositionally biased region" description="Polar residues" evidence="3">
    <location>
        <begin position="149"/>
        <end position="160"/>
    </location>
</feature>
<feature type="compositionally biased region" description="Low complexity" evidence="3">
    <location>
        <begin position="161"/>
        <end position="208"/>
    </location>
</feature>
<feature type="lipid moiety-binding region" description="GPI-anchor amidated serine" evidence="2">
    <location>
        <position position="197"/>
    </location>
</feature>
<dbReference type="EMBL" id="CP017629">
    <property type="protein sequence ID" value="AOW30656.1"/>
    <property type="molecule type" value="Genomic_DNA"/>
</dbReference>
<dbReference type="RefSeq" id="XP_716967.1">
    <property type="nucleotide sequence ID" value="XM_711874.1"/>
</dbReference>
<dbReference type="SMR" id="Q5A5K7"/>
<dbReference type="STRING" id="237561.Q5A5K7"/>
<dbReference type="EnsemblFungi" id="C7_03110W_A-T">
    <property type="protein sequence ID" value="C7_03110W_A-T-p1"/>
    <property type="gene ID" value="C7_03110W_A"/>
</dbReference>
<dbReference type="GeneID" id="3641350"/>
<dbReference type="KEGG" id="cal:CAALFM_C703110WA"/>
<dbReference type="CGD" id="CAL0000177517">
    <property type="gene designation" value="PGA28"/>
</dbReference>
<dbReference type="VEuPathDB" id="FungiDB:C7_03110W_A"/>
<dbReference type="HOGENOM" id="CLU_1219555_0_0_1"/>
<dbReference type="InParanoid" id="Q5A5K7"/>
<dbReference type="OrthoDB" id="4026080at2759"/>
<dbReference type="Proteomes" id="UP000000559">
    <property type="component" value="Chromosome 7"/>
</dbReference>
<dbReference type="GO" id="GO:0005886">
    <property type="term" value="C:plasma membrane"/>
    <property type="evidence" value="ECO:0007669"/>
    <property type="project" value="UniProtKB-SubCell"/>
</dbReference>
<dbReference type="GO" id="GO:0098552">
    <property type="term" value="C:side of membrane"/>
    <property type="evidence" value="ECO:0007669"/>
    <property type="project" value="UniProtKB-KW"/>
</dbReference>
<dbReference type="GO" id="GO:0007155">
    <property type="term" value="P:cell adhesion"/>
    <property type="evidence" value="ECO:0007669"/>
    <property type="project" value="UniProtKB-KW"/>
</dbReference>
<gene>
    <name type="primary">PGA28</name>
    <name type="ordered locus">CAALFM_C703110WA</name>
    <name type="ORF">CaO19.12609</name>
    <name type="ORF">CaO19.5144</name>
</gene>
<evidence type="ECO:0000250" key="1"/>
<evidence type="ECO:0000255" key="2"/>
<evidence type="ECO:0000256" key="3">
    <source>
        <dbReference type="SAM" id="MobiDB-lite"/>
    </source>
</evidence>
<evidence type="ECO:0000269" key="4">
    <source>
    </source>
</evidence>
<evidence type="ECO:0000269" key="5">
    <source>
    </source>
</evidence>
<evidence type="ECO:0000269" key="6">
    <source>
    </source>
</evidence>
<evidence type="ECO:0000305" key="7"/>
<reference key="1">
    <citation type="journal article" date="2004" name="Proc. Natl. Acad. Sci. U.S.A.">
        <title>The diploid genome sequence of Candida albicans.</title>
        <authorList>
            <person name="Jones T."/>
            <person name="Federspiel N.A."/>
            <person name="Chibana H."/>
            <person name="Dungan J."/>
            <person name="Kalman S."/>
            <person name="Magee B.B."/>
            <person name="Newport G."/>
            <person name="Thorstenson Y.R."/>
            <person name="Agabian N."/>
            <person name="Magee P.T."/>
            <person name="Davis R.W."/>
            <person name="Scherer S."/>
        </authorList>
    </citation>
    <scope>NUCLEOTIDE SEQUENCE [LARGE SCALE GENOMIC DNA]</scope>
    <source>
        <strain>SC5314 / ATCC MYA-2876</strain>
    </source>
</reference>
<reference key="2">
    <citation type="journal article" date="2007" name="Genome Biol.">
        <title>Assembly of the Candida albicans genome into sixteen supercontigs aligned on the eight chromosomes.</title>
        <authorList>
            <person name="van het Hoog M."/>
            <person name="Rast T.J."/>
            <person name="Martchenko M."/>
            <person name="Grindle S."/>
            <person name="Dignard D."/>
            <person name="Hogues H."/>
            <person name="Cuomo C."/>
            <person name="Berriman M."/>
            <person name="Scherer S."/>
            <person name="Magee B.B."/>
            <person name="Whiteway M."/>
            <person name="Chibana H."/>
            <person name="Nantel A."/>
            <person name="Magee P.T."/>
        </authorList>
    </citation>
    <scope>GENOME REANNOTATION</scope>
    <source>
        <strain>SC5314 / ATCC MYA-2876</strain>
    </source>
</reference>
<reference key="3">
    <citation type="journal article" date="2013" name="Genome Biol.">
        <title>Assembly of a phased diploid Candida albicans genome facilitates allele-specific measurements and provides a simple model for repeat and indel structure.</title>
        <authorList>
            <person name="Muzzey D."/>
            <person name="Schwartz K."/>
            <person name="Weissman J.S."/>
            <person name="Sherlock G."/>
        </authorList>
    </citation>
    <scope>NUCLEOTIDE SEQUENCE [LARGE SCALE GENOMIC DNA]</scope>
    <scope>GENOME REANNOTATION</scope>
    <source>
        <strain>SC5314 / ATCC MYA-2876</strain>
    </source>
</reference>
<reference key="4">
    <citation type="journal article" date="2003" name="Yeast">
        <title>Genome-wide identification of fungal GPI proteins.</title>
        <authorList>
            <person name="De Groot P.W."/>
            <person name="Hellingwerf K.J."/>
            <person name="Klis F.M."/>
        </authorList>
    </citation>
    <scope>PREDICTION OF GPI-ANCHOR</scope>
</reference>
<reference key="5">
    <citation type="journal article" date="2008" name="BMC Microbiol.">
        <title>Processing of predicted substrates of fungal Kex2 proteinases from Candida albicans, C. glabrata, Saccharomyces cerevisiae and Pichia pastoris.</title>
        <authorList>
            <person name="Bader O."/>
            <person name="Krauke Y."/>
            <person name="Hube B."/>
        </authorList>
    </citation>
    <scope>PREDICTION AS A CLEAVAGE SUBSTRATE FOR KEX2</scope>
</reference>
<reference key="6">
    <citation type="journal article" date="2011" name="BMC Genomics">
        <title>FungalRV: adhesin prediction and immunoinformatics portal for human fungal pathogens.</title>
        <authorList>
            <person name="Chaudhuri R."/>
            <person name="Ansari F.A."/>
            <person name="Raghunandanan M.V."/>
            <person name="Ramachandran S."/>
        </authorList>
    </citation>
    <scope>FUNCTION</scope>
</reference>
<reference key="7">
    <citation type="journal article" date="2013" name="Antimicrob. Agents Chemother.">
        <title>Milbemycins: more than efflux inhibitors for fungal pathogens.</title>
        <authorList>
            <person name="Silva L.V."/>
            <person name="Sanguinetti M."/>
            <person name="Vandeputte P."/>
            <person name="Torelli R."/>
            <person name="Rochat B."/>
            <person name="Sanglard D."/>
        </authorList>
    </citation>
    <scope>INDUCTION</scope>
</reference>
<reference key="8">
    <citation type="journal article" date="2013" name="PLoS ONE">
        <title>Characterization of genetic determinants that modulate Candida albicans filamentation in the presence of bacteria.</title>
        <authorList>
            <person name="Fox S.J."/>
            <person name="Shelton B.T."/>
            <person name="Kruppa M.D."/>
        </authorList>
    </citation>
    <scope>FUNCTION</scope>
</reference>